<proteinExistence type="inferred from homology"/>
<accession>Q49WE5</accession>
<dbReference type="EMBL" id="AP008934">
    <property type="protein sequence ID" value="BAE18914.1"/>
    <property type="molecule type" value="Genomic_DNA"/>
</dbReference>
<dbReference type="RefSeq" id="WP_011303474.1">
    <property type="nucleotide sequence ID" value="NZ_MTGA01000039.1"/>
</dbReference>
<dbReference type="SMR" id="Q49WE5"/>
<dbReference type="GeneID" id="3615396"/>
<dbReference type="KEGG" id="ssp:SSP1769"/>
<dbReference type="PATRIC" id="fig|342451.11.peg.1765"/>
<dbReference type="eggNOG" id="COG2814">
    <property type="taxonomic scope" value="Bacteria"/>
</dbReference>
<dbReference type="HOGENOM" id="CLU_054518_0_0_9"/>
<dbReference type="UniPathway" id="UPA00556"/>
<dbReference type="Proteomes" id="UP000006371">
    <property type="component" value="Chromosome"/>
</dbReference>
<dbReference type="GO" id="GO:0005886">
    <property type="term" value="C:plasma membrane"/>
    <property type="evidence" value="ECO:0007669"/>
    <property type="project" value="UniProtKB-SubCell"/>
</dbReference>
<dbReference type="GO" id="GO:0015297">
    <property type="term" value="F:antiporter activity"/>
    <property type="evidence" value="ECO:0007669"/>
    <property type="project" value="UniProtKB-KW"/>
</dbReference>
<dbReference type="GO" id="GO:0006869">
    <property type="term" value="P:lipid transport"/>
    <property type="evidence" value="ECO:0007669"/>
    <property type="project" value="UniProtKB-KW"/>
</dbReference>
<dbReference type="GO" id="GO:0070395">
    <property type="term" value="P:lipoteichoic acid biosynthetic process"/>
    <property type="evidence" value="ECO:0007669"/>
    <property type="project" value="UniProtKB-UniPathway"/>
</dbReference>
<dbReference type="CDD" id="cd17325">
    <property type="entry name" value="MFS_MdtG_SLC18_like"/>
    <property type="match status" value="1"/>
</dbReference>
<dbReference type="Gene3D" id="1.20.1250.20">
    <property type="entry name" value="MFS general substrate transporter like domains"/>
    <property type="match status" value="2"/>
</dbReference>
<dbReference type="InterPro" id="IPR011701">
    <property type="entry name" value="MFS"/>
</dbReference>
<dbReference type="InterPro" id="IPR020846">
    <property type="entry name" value="MFS_dom"/>
</dbReference>
<dbReference type="InterPro" id="IPR050189">
    <property type="entry name" value="MFS_Efflux_Transporters"/>
</dbReference>
<dbReference type="InterPro" id="IPR036259">
    <property type="entry name" value="MFS_trans_sf"/>
</dbReference>
<dbReference type="NCBIfam" id="NF047396">
    <property type="entry name" value="MFS_flip_LtaA"/>
    <property type="match status" value="1"/>
</dbReference>
<dbReference type="PANTHER" id="PTHR43124:SF3">
    <property type="entry name" value="CHLORAMPHENICOL EFFLUX PUMP RV0191"/>
    <property type="match status" value="1"/>
</dbReference>
<dbReference type="PANTHER" id="PTHR43124">
    <property type="entry name" value="PURINE EFFLUX PUMP PBUE"/>
    <property type="match status" value="1"/>
</dbReference>
<dbReference type="Pfam" id="PF07690">
    <property type="entry name" value="MFS_1"/>
    <property type="match status" value="1"/>
</dbReference>
<dbReference type="SUPFAM" id="SSF103473">
    <property type="entry name" value="MFS general substrate transporter"/>
    <property type="match status" value="1"/>
</dbReference>
<dbReference type="PROSITE" id="PS50850">
    <property type="entry name" value="MFS"/>
    <property type="match status" value="1"/>
</dbReference>
<keyword id="KW-0050">Antiport</keyword>
<keyword id="KW-1003">Cell membrane</keyword>
<keyword id="KW-0445">Lipid transport</keyword>
<keyword id="KW-0472">Membrane</keyword>
<keyword id="KW-1185">Reference proteome</keyword>
<keyword id="KW-0812">Transmembrane</keyword>
<keyword id="KW-1133">Transmembrane helix</keyword>
<keyword id="KW-0813">Transport</keyword>
<keyword id="KW-0843">Virulence</keyword>
<gene>
    <name type="primary">ltaA</name>
    <name type="ordered locus">SSP1769</name>
</gene>
<evidence type="ECO:0000250" key="1">
    <source>
        <dbReference type="UniProtKB" id="Q2FZP8"/>
    </source>
</evidence>
<evidence type="ECO:0000255" key="2"/>
<evidence type="ECO:0000305" key="3"/>
<feature type="chain" id="PRO_0000287164" description="Proton-coupled antiporter flippase LtaA">
    <location>
        <begin position="1"/>
        <end position="398"/>
    </location>
</feature>
<feature type="transmembrane region" description="Helical" evidence="2">
    <location>
        <begin position="15"/>
        <end position="40"/>
    </location>
</feature>
<feature type="transmembrane region" description="Helical" evidence="2">
    <location>
        <begin position="46"/>
        <end position="73"/>
    </location>
</feature>
<feature type="transmembrane region" description="Helical" evidence="2">
    <location>
        <begin position="80"/>
        <end position="99"/>
    </location>
</feature>
<feature type="transmembrane region" description="Helical" evidence="2">
    <location>
        <begin position="105"/>
        <end position="126"/>
    </location>
</feature>
<feature type="transmembrane region" description="Helical" evidence="2">
    <location>
        <begin position="138"/>
        <end position="159"/>
    </location>
</feature>
<feature type="transmembrane region" description="Helical" evidence="2">
    <location>
        <begin position="165"/>
        <end position="184"/>
    </location>
</feature>
<feature type="transmembrane region" description="Helical" evidence="2">
    <location>
        <begin position="212"/>
        <end position="234"/>
    </location>
</feature>
<feature type="transmembrane region" description="Helical" evidence="2">
    <location>
        <begin position="246"/>
        <end position="264"/>
    </location>
</feature>
<feature type="transmembrane region" description="Helical" evidence="2">
    <location>
        <begin position="276"/>
        <end position="297"/>
    </location>
</feature>
<feature type="transmembrane region" description="Helical" evidence="2">
    <location>
        <begin position="303"/>
        <end position="326"/>
    </location>
</feature>
<feature type="transmembrane region" description="Helical" evidence="2">
    <location>
        <begin position="338"/>
        <end position="359"/>
    </location>
</feature>
<feature type="transmembrane region" description="Helical" evidence="2">
    <location>
        <begin position="371"/>
        <end position="389"/>
    </location>
</feature>
<protein>
    <recommendedName>
        <fullName evidence="1">Proton-coupled antiporter flippase LtaA</fullName>
    </recommendedName>
    <alternativeName>
        <fullName evidence="1">Lipoteichoic acid protein A</fullName>
    </alternativeName>
</protein>
<reference key="1">
    <citation type="journal article" date="2005" name="Proc. Natl. Acad. Sci. U.S.A.">
        <title>Whole genome sequence of Staphylococcus saprophyticus reveals the pathogenesis of uncomplicated urinary tract infection.</title>
        <authorList>
            <person name="Kuroda M."/>
            <person name="Yamashita A."/>
            <person name="Hirakawa H."/>
            <person name="Kumano M."/>
            <person name="Morikawa K."/>
            <person name="Higashide M."/>
            <person name="Maruyama A."/>
            <person name="Inose Y."/>
            <person name="Matoba K."/>
            <person name="Toh H."/>
            <person name="Kuhara S."/>
            <person name="Hattori M."/>
            <person name="Ohta T."/>
        </authorList>
    </citation>
    <scope>NUCLEOTIDE SEQUENCE [LARGE SCALE GENOMIC DNA]</scope>
    <source>
        <strain>ATCC 15305 / DSM 20229 / NCIMB 8711 / NCTC 7292 / S-41</strain>
    </source>
</reference>
<comment type="function">
    <text evidence="1">Proton-coupled antiporter flippase that catalyzes the translocation, from the inner to the outer leaflet of the cell membrane, of the lipid-linked disaccharide (anchor-LLD) that anchors lipoteichoic acids (LTA) to the cell membrane.</text>
</comment>
<comment type="pathway">
    <text evidence="1">Cell wall biogenesis; lipoteichoic acid biosynthesis.</text>
</comment>
<comment type="subcellular location">
    <subcellularLocation>
        <location evidence="1">Cell membrane</location>
        <topology evidence="1">Multi-pass membrane protein</topology>
    </subcellularLocation>
</comment>
<comment type="similarity">
    <text evidence="3">Belongs to the major facilitator superfamily. LtaA family.</text>
</comment>
<sequence length="398" mass="44327">MQSSSLNNYNSNKNFIIMLIILFLMEFARGMYILSYLALLPTATSIAVGITSIAISIHFIADATTNFVIGFLLKRLGTKLVLTLGFLLAFASLFLVIWFPTSPFVLIASAILLGIAVSPIWVIMLASVDENNRGKQMGYVYFSWLLGLLVGMVGMNVIFKFHPTQFAFLMSLVVLIAWILYYFVKVRLTNYNTRPVKQQLGQIVDVTKRHMILFPGILLQGASITALVPILPTYATKVVGVSTLEYTMAIVFGGIGCAISMLFLSKIIDKHGTLFMYWVIFGGFVLYTLMIFALSLITNITIVWVLAVFIGLMYGILLPAWNTFMASHIHSDEQEETWGVFNSVQGFGSMIGPLVGGLITEFTKSVNNTFYFSALVFLFLAIFYGIYFVKVNNKTKTS</sequence>
<organism>
    <name type="scientific">Staphylococcus saprophyticus subsp. saprophyticus (strain ATCC 15305 / DSM 20229 / NCIMB 8711 / NCTC 7292 / S-41)</name>
    <dbReference type="NCBI Taxonomy" id="342451"/>
    <lineage>
        <taxon>Bacteria</taxon>
        <taxon>Bacillati</taxon>
        <taxon>Bacillota</taxon>
        <taxon>Bacilli</taxon>
        <taxon>Bacillales</taxon>
        <taxon>Staphylococcaceae</taxon>
        <taxon>Staphylococcus</taxon>
    </lineage>
</organism>
<name>LTAA_STAS1</name>